<comment type="function">
    <text evidence="1">Catalyzes the formation of acetyl phosphate from acetate and ATP. Can also catalyze the reverse reaction.</text>
</comment>
<comment type="catalytic activity">
    <reaction evidence="1">
        <text>acetate + ATP = acetyl phosphate + ADP</text>
        <dbReference type="Rhea" id="RHEA:11352"/>
        <dbReference type="ChEBI" id="CHEBI:22191"/>
        <dbReference type="ChEBI" id="CHEBI:30089"/>
        <dbReference type="ChEBI" id="CHEBI:30616"/>
        <dbReference type="ChEBI" id="CHEBI:456216"/>
        <dbReference type="EC" id="2.7.2.1"/>
    </reaction>
</comment>
<comment type="cofactor">
    <cofactor evidence="1">
        <name>Mg(2+)</name>
        <dbReference type="ChEBI" id="CHEBI:18420"/>
    </cofactor>
    <cofactor evidence="1">
        <name>Mn(2+)</name>
        <dbReference type="ChEBI" id="CHEBI:29035"/>
    </cofactor>
    <text evidence="1">Mg(2+). Can also accept Mn(2+).</text>
</comment>
<comment type="pathway">
    <text evidence="1">Metabolic intermediate biosynthesis; acetyl-CoA biosynthesis; acetyl-CoA from acetate: step 1/2.</text>
</comment>
<comment type="subunit">
    <text evidence="1">Homodimer.</text>
</comment>
<comment type="subcellular location">
    <subcellularLocation>
        <location evidence="1">Cytoplasm</location>
    </subcellularLocation>
</comment>
<comment type="similarity">
    <text evidence="1">Belongs to the acetokinase family.</text>
</comment>
<feature type="chain" id="PRO_1000116811" description="Acetate kinase">
    <location>
        <begin position="1"/>
        <end position="396"/>
    </location>
</feature>
<feature type="active site" description="Proton donor/acceptor" evidence="1">
    <location>
        <position position="146"/>
    </location>
</feature>
<feature type="binding site" evidence="1">
    <location>
        <position position="8"/>
    </location>
    <ligand>
        <name>Mg(2+)</name>
        <dbReference type="ChEBI" id="CHEBI:18420"/>
    </ligand>
</feature>
<feature type="binding site" evidence="1">
    <location>
        <position position="15"/>
    </location>
    <ligand>
        <name>ATP</name>
        <dbReference type="ChEBI" id="CHEBI:30616"/>
    </ligand>
</feature>
<feature type="binding site" evidence="1">
    <location>
        <position position="89"/>
    </location>
    <ligand>
        <name>substrate</name>
    </ligand>
</feature>
<feature type="binding site" evidence="1">
    <location>
        <begin position="206"/>
        <end position="210"/>
    </location>
    <ligand>
        <name>ATP</name>
        <dbReference type="ChEBI" id="CHEBI:30616"/>
    </ligand>
</feature>
<feature type="binding site" evidence="1">
    <location>
        <begin position="283"/>
        <end position="285"/>
    </location>
    <ligand>
        <name>ATP</name>
        <dbReference type="ChEBI" id="CHEBI:30616"/>
    </ligand>
</feature>
<feature type="binding site" evidence="1">
    <location>
        <begin position="331"/>
        <end position="335"/>
    </location>
    <ligand>
        <name>ATP</name>
        <dbReference type="ChEBI" id="CHEBI:30616"/>
    </ligand>
</feature>
<feature type="binding site" evidence="1">
    <location>
        <position position="383"/>
    </location>
    <ligand>
        <name>Mg(2+)</name>
        <dbReference type="ChEBI" id="CHEBI:18420"/>
    </ligand>
</feature>
<feature type="site" description="Transition state stabilizer" evidence="1">
    <location>
        <position position="178"/>
    </location>
</feature>
<feature type="site" description="Transition state stabilizer" evidence="1">
    <location>
        <position position="239"/>
    </location>
</feature>
<reference key="1">
    <citation type="journal article" date="2009" name="J. Bacteriol.">
        <title>Role of conjugative elements in the evolution of the multidrug-resistant pandemic clone Streptococcus pneumoniae Spain23F ST81.</title>
        <authorList>
            <person name="Croucher N.J."/>
            <person name="Walker D."/>
            <person name="Romero P."/>
            <person name="Lennard N."/>
            <person name="Paterson G.K."/>
            <person name="Bason N.C."/>
            <person name="Mitchell A.M."/>
            <person name="Quail M.A."/>
            <person name="Andrew P.W."/>
            <person name="Parkhill J."/>
            <person name="Bentley S.D."/>
            <person name="Mitchell T.J."/>
        </authorList>
    </citation>
    <scope>NUCLEOTIDE SEQUENCE [LARGE SCALE GENOMIC DNA]</scope>
    <source>
        <strain>ATCC 700669 / Spain 23F-1</strain>
    </source>
</reference>
<protein>
    <recommendedName>
        <fullName evidence="1">Acetate kinase</fullName>
        <ecNumber evidence="1">2.7.2.1</ecNumber>
    </recommendedName>
    <alternativeName>
        <fullName evidence="1">Acetokinase</fullName>
    </alternativeName>
</protein>
<dbReference type="EC" id="2.7.2.1" evidence="1"/>
<dbReference type="EMBL" id="FM211187">
    <property type="protein sequence ID" value="CAR69811.1"/>
    <property type="molecule type" value="Genomic_DNA"/>
</dbReference>
<dbReference type="RefSeq" id="WP_000167766.1">
    <property type="nucleotide sequence ID" value="NC_011900.1"/>
</dbReference>
<dbReference type="SMR" id="B8ZPA4"/>
<dbReference type="KEGG" id="sne:SPN23F20660"/>
<dbReference type="HOGENOM" id="CLU_020352_0_1_9"/>
<dbReference type="UniPathway" id="UPA00340">
    <property type="reaction ID" value="UER00458"/>
</dbReference>
<dbReference type="GO" id="GO:0005737">
    <property type="term" value="C:cytoplasm"/>
    <property type="evidence" value="ECO:0007669"/>
    <property type="project" value="UniProtKB-SubCell"/>
</dbReference>
<dbReference type="GO" id="GO:0008776">
    <property type="term" value="F:acetate kinase activity"/>
    <property type="evidence" value="ECO:0007669"/>
    <property type="project" value="UniProtKB-UniRule"/>
</dbReference>
<dbReference type="GO" id="GO:0005524">
    <property type="term" value="F:ATP binding"/>
    <property type="evidence" value="ECO:0007669"/>
    <property type="project" value="UniProtKB-KW"/>
</dbReference>
<dbReference type="GO" id="GO:0000287">
    <property type="term" value="F:magnesium ion binding"/>
    <property type="evidence" value="ECO:0007669"/>
    <property type="project" value="UniProtKB-UniRule"/>
</dbReference>
<dbReference type="GO" id="GO:0006083">
    <property type="term" value="P:acetate metabolic process"/>
    <property type="evidence" value="ECO:0007669"/>
    <property type="project" value="TreeGrafter"/>
</dbReference>
<dbReference type="GO" id="GO:0006085">
    <property type="term" value="P:acetyl-CoA biosynthetic process"/>
    <property type="evidence" value="ECO:0007669"/>
    <property type="project" value="UniProtKB-UniRule"/>
</dbReference>
<dbReference type="CDD" id="cd24010">
    <property type="entry name" value="ASKHA_NBD_AcK_PK"/>
    <property type="match status" value="1"/>
</dbReference>
<dbReference type="Gene3D" id="3.30.420.40">
    <property type="match status" value="2"/>
</dbReference>
<dbReference type="HAMAP" id="MF_00020">
    <property type="entry name" value="Acetate_kinase"/>
    <property type="match status" value="1"/>
</dbReference>
<dbReference type="InterPro" id="IPR004372">
    <property type="entry name" value="Ac/propionate_kinase"/>
</dbReference>
<dbReference type="InterPro" id="IPR000890">
    <property type="entry name" value="Aliphatic_acid_kin_short-chain"/>
</dbReference>
<dbReference type="InterPro" id="IPR023865">
    <property type="entry name" value="Aliphatic_acid_kinase_CS"/>
</dbReference>
<dbReference type="InterPro" id="IPR043129">
    <property type="entry name" value="ATPase_NBD"/>
</dbReference>
<dbReference type="NCBIfam" id="TIGR00016">
    <property type="entry name" value="ackA"/>
    <property type="match status" value="1"/>
</dbReference>
<dbReference type="PANTHER" id="PTHR21060">
    <property type="entry name" value="ACETATE KINASE"/>
    <property type="match status" value="1"/>
</dbReference>
<dbReference type="PANTHER" id="PTHR21060:SF15">
    <property type="entry name" value="ACETATE KINASE-RELATED"/>
    <property type="match status" value="1"/>
</dbReference>
<dbReference type="Pfam" id="PF00871">
    <property type="entry name" value="Acetate_kinase"/>
    <property type="match status" value="1"/>
</dbReference>
<dbReference type="PIRSF" id="PIRSF000722">
    <property type="entry name" value="Acetate_prop_kin"/>
    <property type="match status" value="1"/>
</dbReference>
<dbReference type="PRINTS" id="PR00471">
    <property type="entry name" value="ACETATEKNASE"/>
</dbReference>
<dbReference type="SUPFAM" id="SSF53067">
    <property type="entry name" value="Actin-like ATPase domain"/>
    <property type="match status" value="2"/>
</dbReference>
<dbReference type="PROSITE" id="PS01075">
    <property type="entry name" value="ACETATE_KINASE_1"/>
    <property type="match status" value="1"/>
</dbReference>
<dbReference type="PROSITE" id="PS01076">
    <property type="entry name" value="ACETATE_KINASE_2"/>
    <property type="match status" value="1"/>
</dbReference>
<accession>B8ZPA4</accession>
<gene>
    <name evidence="1" type="primary">ackA</name>
    <name type="ordered locus">SPN23F20660</name>
</gene>
<evidence type="ECO:0000255" key="1">
    <source>
        <dbReference type="HAMAP-Rule" id="MF_00020"/>
    </source>
</evidence>
<name>ACKA_STRPJ</name>
<sequence>MTKTIAINAGSSSLKWQLYLMPEEKVLAKGLIERIGLKDSISTVKFDGRSEQQILDIENHTQAVKILLDDLIRFDIIKAYDEITGVGHRVVAGGEYFKESTVVEGDVLEKVEELSLLAPLHNPANAAGVRAFKELLPDITSVVVFDTSFHTSMPEKAYRYPLPTKYYTENKVRKYGAHGTSHQFVAGEAAKLLGRPLEDLKLITCHIGNGGSITAVKAGKSVDTSMGFTPLGGIMMGTRTGDIDPAIIPYLMQYTEDFNTPEDISRVLNRESGLLGVSANSSDMRDIEAAVAEGNHEASLAYEMYVDRIQKHIGQYLAVLNGADAIVFTAGVGENAESFRRDVISGISWFGCDVDDEKNVFGVTGDISTEAAKIRVLVIPTDEELVIARDVERLKK</sequence>
<keyword id="KW-0067">ATP-binding</keyword>
<keyword id="KW-0963">Cytoplasm</keyword>
<keyword id="KW-0418">Kinase</keyword>
<keyword id="KW-0460">Magnesium</keyword>
<keyword id="KW-0479">Metal-binding</keyword>
<keyword id="KW-0547">Nucleotide-binding</keyword>
<keyword id="KW-0808">Transferase</keyword>
<proteinExistence type="inferred from homology"/>
<organism>
    <name type="scientific">Streptococcus pneumoniae (strain ATCC 700669 / Spain 23F-1)</name>
    <dbReference type="NCBI Taxonomy" id="561276"/>
    <lineage>
        <taxon>Bacteria</taxon>
        <taxon>Bacillati</taxon>
        <taxon>Bacillota</taxon>
        <taxon>Bacilli</taxon>
        <taxon>Lactobacillales</taxon>
        <taxon>Streptococcaceae</taxon>
        <taxon>Streptococcus</taxon>
    </lineage>
</organism>